<sequence length="367" mass="41039">MYFELAKRNLKRNLLRSILALLGIIIGVAAISSLGILGGGLKQGIMENLGSISNYIIVFPNYQNGYTSFDKRDIEKLRVLNCKVIPVYATSDFVYIKGKNRKAYANIFGIDKNDIKYLNLKVKVSDTSVAVDTFFSNVNDVNVGNQLEIKNISLRICGIYNSTFLFPDNSLILTAKTYRRFYGENNYNYSRIILYVKNINDIDKIKNETDKILNRKEKKCIIISLNSILEAINGVITKVSYFLMGIGAISLLVAGIGIGNVMLMSVVERTTEIGVMRSIGASKKDIIILFLYEALILGVIGSLIGAFLSLFFGYLIVHYLLKTSLSYYAIFYMIIGIIFGILTSLISALYPAYKASKLDPIKSLRNE</sequence>
<keyword id="KW-1003">Cell membrane</keyword>
<keyword id="KW-0472">Membrane</keyword>
<keyword id="KW-1185">Reference proteome</keyword>
<keyword id="KW-0812">Transmembrane</keyword>
<keyword id="KW-1133">Transmembrane helix</keyword>
<keyword id="KW-0813">Transport</keyword>
<organism>
    <name type="scientific">Methanocaldococcus jannaschii (strain ATCC 43067 / DSM 2661 / JAL-1 / JCM 10045 / NBRC 100440)</name>
    <name type="common">Methanococcus jannaschii</name>
    <dbReference type="NCBI Taxonomy" id="243232"/>
    <lineage>
        <taxon>Archaea</taxon>
        <taxon>Methanobacteriati</taxon>
        <taxon>Methanobacteriota</taxon>
        <taxon>Methanomada group</taxon>
        <taxon>Methanococci</taxon>
        <taxon>Methanococcales</taxon>
        <taxon>Methanocaldococcaceae</taxon>
        <taxon>Methanocaldococcus</taxon>
    </lineage>
</organism>
<protein>
    <recommendedName>
        <fullName>Uncharacterized ABC transporter permease MJ0797</fullName>
    </recommendedName>
</protein>
<gene>
    <name type="ordered locus">MJ0797</name>
</gene>
<comment type="subcellular location">
    <subcellularLocation>
        <location evidence="2">Cell membrane</location>
        <topology evidence="2">Multi-pass membrane protein</topology>
    </subcellularLocation>
</comment>
<comment type="similarity">
    <text evidence="2">Belongs to the ABC-4 integral membrane protein family.</text>
</comment>
<proteinExistence type="inferred from homology"/>
<evidence type="ECO:0000255" key="1"/>
<evidence type="ECO:0000305" key="2"/>
<name>Y797_METJA</name>
<accession>Q58207</accession>
<dbReference type="EMBL" id="L77117">
    <property type="protein sequence ID" value="AAB98792.1"/>
    <property type="molecule type" value="Genomic_DNA"/>
</dbReference>
<dbReference type="PIR" id="E64399">
    <property type="entry name" value="E64399"/>
</dbReference>
<dbReference type="RefSeq" id="WP_010870307.1">
    <property type="nucleotide sequence ID" value="NC_000909.1"/>
</dbReference>
<dbReference type="SMR" id="Q58207"/>
<dbReference type="STRING" id="243232.MJ_0797"/>
<dbReference type="TCDB" id="3.A.1.122.14">
    <property type="family name" value="the atp-binding cassette (abc) superfamily"/>
</dbReference>
<dbReference type="PaxDb" id="243232-MJ_0797"/>
<dbReference type="EnsemblBacteria" id="AAB98792">
    <property type="protein sequence ID" value="AAB98792"/>
    <property type="gene ID" value="MJ_0797"/>
</dbReference>
<dbReference type="GeneID" id="1451679"/>
<dbReference type="KEGG" id="mja:MJ_0797"/>
<dbReference type="eggNOG" id="arCOG02312">
    <property type="taxonomic scope" value="Archaea"/>
</dbReference>
<dbReference type="HOGENOM" id="CLU_000604_8_0_2"/>
<dbReference type="InParanoid" id="Q58207"/>
<dbReference type="OrthoDB" id="11469at2157"/>
<dbReference type="PhylomeDB" id="Q58207"/>
<dbReference type="Proteomes" id="UP000000805">
    <property type="component" value="Chromosome"/>
</dbReference>
<dbReference type="GO" id="GO:0005886">
    <property type="term" value="C:plasma membrane"/>
    <property type="evidence" value="ECO:0000318"/>
    <property type="project" value="GO_Central"/>
</dbReference>
<dbReference type="GO" id="GO:0022857">
    <property type="term" value="F:transmembrane transporter activity"/>
    <property type="evidence" value="ECO:0000318"/>
    <property type="project" value="GO_Central"/>
</dbReference>
<dbReference type="InterPro" id="IPR003838">
    <property type="entry name" value="ABC3_permease_C"/>
</dbReference>
<dbReference type="InterPro" id="IPR025857">
    <property type="entry name" value="MacB_PCD"/>
</dbReference>
<dbReference type="InterPro" id="IPR050250">
    <property type="entry name" value="Macrolide_Exporter_MacB"/>
</dbReference>
<dbReference type="PANTHER" id="PTHR30572:SF4">
    <property type="entry name" value="ABC TRANSPORTER PERMEASE YTRF"/>
    <property type="match status" value="1"/>
</dbReference>
<dbReference type="PANTHER" id="PTHR30572">
    <property type="entry name" value="MEMBRANE COMPONENT OF TRANSPORTER-RELATED"/>
    <property type="match status" value="1"/>
</dbReference>
<dbReference type="Pfam" id="PF02687">
    <property type="entry name" value="FtsX"/>
    <property type="match status" value="1"/>
</dbReference>
<dbReference type="Pfam" id="PF12704">
    <property type="entry name" value="MacB_PCD"/>
    <property type="match status" value="1"/>
</dbReference>
<feature type="chain" id="PRO_0000107049" description="Uncharacterized ABC transporter permease MJ0797">
    <location>
        <begin position="1"/>
        <end position="367"/>
    </location>
</feature>
<feature type="transmembrane region" description="Helical" evidence="1">
    <location>
        <begin position="18"/>
        <end position="38"/>
    </location>
</feature>
<feature type="transmembrane region" description="Helical" evidence="1">
    <location>
        <begin position="239"/>
        <end position="259"/>
    </location>
</feature>
<feature type="transmembrane region" description="Helical" evidence="1">
    <location>
        <begin position="296"/>
        <end position="316"/>
    </location>
</feature>
<feature type="transmembrane region" description="Helical" evidence="1">
    <location>
        <begin position="329"/>
        <end position="349"/>
    </location>
</feature>
<reference key="1">
    <citation type="journal article" date="1996" name="Science">
        <title>Complete genome sequence of the methanogenic archaeon, Methanococcus jannaschii.</title>
        <authorList>
            <person name="Bult C.J."/>
            <person name="White O."/>
            <person name="Olsen G.J."/>
            <person name="Zhou L."/>
            <person name="Fleischmann R.D."/>
            <person name="Sutton G.G."/>
            <person name="Blake J.A."/>
            <person name="FitzGerald L.M."/>
            <person name="Clayton R.A."/>
            <person name="Gocayne J.D."/>
            <person name="Kerlavage A.R."/>
            <person name="Dougherty B.A."/>
            <person name="Tomb J.-F."/>
            <person name="Adams M.D."/>
            <person name="Reich C.I."/>
            <person name="Overbeek R."/>
            <person name="Kirkness E.F."/>
            <person name="Weinstock K.G."/>
            <person name="Merrick J.M."/>
            <person name="Glodek A."/>
            <person name="Scott J.L."/>
            <person name="Geoghagen N.S.M."/>
            <person name="Weidman J.F."/>
            <person name="Fuhrmann J.L."/>
            <person name="Nguyen D."/>
            <person name="Utterback T.R."/>
            <person name="Kelley J.M."/>
            <person name="Peterson J.D."/>
            <person name="Sadow P.W."/>
            <person name="Hanna M.C."/>
            <person name="Cotton M.D."/>
            <person name="Roberts K.M."/>
            <person name="Hurst M.A."/>
            <person name="Kaine B.P."/>
            <person name="Borodovsky M."/>
            <person name="Klenk H.-P."/>
            <person name="Fraser C.M."/>
            <person name="Smith H.O."/>
            <person name="Woese C.R."/>
            <person name="Venter J.C."/>
        </authorList>
    </citation>
    <scope>NUCLEOTIDE SEQUENCE [LARGE SCALE GENOMIC DNA]</scope>
    <source>
        <strain>ATCC 43067 / DSM 2661 / JAL-1 / JCM 10045 / NBRC 100440</strain>
    </source>
</reference>